<organism>
    <name type="scientific">Sulfurimonas denitrificans (strain ATCC 33889 / DSM 1251)</name>
    <name type="common">Thiomicrospira denitrificans (strain ATCC 33889 / DSM 1251)</name>
    <dbReference type="NCBI Taxonomy" id="326298"/>
    <lineage>
        <taxon>Bacteria</taxon>
        <taxon>Pseudomonadati</taxon>
        <taxon>Campylobacterota</taxon>
        <taxon>Epsilonproteobacteria</taxon>
        <taxon>Campylobacterales</taxon>
        <taxon>Sulfurimonadaceae</taxon>
        <taxon>Sulfurimonas</taxon>
    </lineage>
</organism>
<protein>
    <recommendedName>
        <fullName evidence="1">3-isopropylmalate dehydratase small subunit</fullName>
        <ecNumber evidence="1">4.2.1.33</ecNumber>
    </recommendedName>
    <alternativeName>
        <fullName evidence="1">Alpha-IPM isomerase</fullName>
        <shortName evidence="1">IPMI</shortName>
    </alternativeName>
    <alternativeName>
        <fullName evidence="1">Isopropylmalate isomerase</fullName>
    </alternativeName>
</protein>
<comment type="function">
    <text evidence="1">Catalyzes the isomerization between 2-isopropylmalate and 3-isopropylmalate, via the formation of 2-isopropylmaleate.</text>
</comment>
<comment type="catalytic activity">
    <reaction evidence="1">
        <text>(2R,3S)-3-isopropylmalate = (2S)-2-isopropylmalate</text>
        <dbReference type="Rhea" id="RHEA:32287"/>
        <dbReference type="ChEBI" id="CHEBI:1178"/>
        <dbReference type="ChEBI" id="CHEBI:35121"/>
        <dbReference type="EC" id="4.2.1.33"/>
    </reaction>
</comment>
<comment type="pathway">
    <text evidence="1">Amino-acid biosynthesis; L-leucine biosynthesis; L-leucine from 3-methyl-2-oxobutanoate: step 2/4.</text>
</comment>
<comment type="subunit">
    <text evidence="1">Heterodimer of LeuC and LeuD.</text>
</comment>
<comment type="similarity">
    <text evidence="1">Belongs to the LeuD family. LeuD type 2 subfamily.</text>
</comment>
<dbReference type="EC" id="4.2.1.33" evidence="1"/>
<dbReference type="EMBL" id="CP000153">
    <property type="protein sequence ID" value="ABB44380.1"/>
    <property type="molecule type" value="Genomic_DNA"/>
</dbReference>
<dbReference type="RefSeq" id="WP_011372732.1">
    <property type="nucleotide sequence ID" value="NC_007575.1"/>
</dbReference>
<dbReference type="SMR" id="Q30RK1"/>
<dbReference type="STRING" id="326298.Suden_1102"/>
<dbReference type="KEGG" id="tdn:Suden_1102"/>
<dbReference type="eggNOG" id="COG0066">
    <property type="taxonomic scope" value="Bacteria"/>
</dbReference>
<dbReference type="HOGENOM" id="CLU_081378_1_1_7"/>
<dbReference type="OrthoDB" id="9777465at2"/>
<dbReference type="UniPathway" id="UPA00048">
    <property type="reaction ID" value="UER00071"/>
</dbReference>
<dbReference type="Proteomes" id="UP000002714">
    <property type="component" value="Chromosome"/>
</dbReference>
<dbReference type="GO" id="GO:0003861">
    <property type="term" value="F:3-isopropylmalate dehydratase activity"/>
    <property type="evidence" value="ECO:0007669"/>
    <property type="project" value="UniProtKB-UniRule"/>
</dbReference>
<dbReference type="GO" id="GO:0009098">
    <property type="term" value="P:L-leucine biosynthetic process"/>
    <property type="evidence" value="ECO:0007669"/>
    <property type="project" value="UniProtKB-UniRule"/>
</dbReference>
<dbReference type="CDD" id="cd01577">
    <property type="entry name" value="IPMI_Swivel"/>
    <property type="match status" value="1"/>
</dbReference>
<dbReference type="Gene3D" id="3.20.19.10">
    <property type="entry name" value="Aconitase, domain 4"/>
    <property type="match status" value="1"/>
</dbReference>
<dbReference type="HAMAP" id="MF_01032">
    <property type="entry name" value="LeuD_type2"/>
    <property type="match status" value="1"/>
</dbReference>
<dbReference type="InterPro" id="IPR015928">
    <property type="entry name" value="Aconitase/3IPM_dehydase_swvl"/>
</dbReference>
<dbReference type="InterPro" id="IPR000573">
    <property type="entry name" value="AconitaseA/IPMdHydase_ssu_swvl"/>
</dbReference>
<dbReference type="InterPro" id="IPR033940">
    <property type="entry name" value="IPMI_Swivel"/>
</dbReference>
<dbReference type="InterPro" id="IPR050075">
    <property type="entry name" value="LeuD"/>
</dbReference>
<dbReference type="InterPro" id="IPR011827">
    <property type="entry name" value="LeuD_type2/HacB/DmdB"/>
</dbReference>
<dbReference type="NCBIfam" id="TIGR02087">
    <property type="entry name" value="LEUD_arch"/>
    <property type="match status" value="1"/>
</dbReference>
<dbReference type="PANTHER" id="PTHR43345:SF2">
    <property type="entry name" value="3-ISOPROPYLMALATE DEHYDRATASE SMALL SUBUNIT 1"/>
    <property type="match status" value="1"/>
</dbReference>
<dbReference type="PANTHER" id="PTHR43345">
    <property type="entry name" value="3-ISOPROPYLMALATE DEHYDRATASE SMALL SUBUNIT 2-RELATED-RELATED"/>
    <property type="match status" value="1"/>
</dbReference>
<dbReference type="Pfam" id="PF00694">
    <property type="entry name" value="Aconitase_C"/>
    <property type="match status" value="1"/>
</dbReference>
<dbReference type="SUPFAM" id="SSF52016">
    <property type="entry name" value="LeuD/IlvD-like"/>
    <property type="match status" value="1"/>
</dbReference>
<name>LEUD_SULDN</name>
<gene>
    <name evidence="1" type="primary">leuD</name>
    <name type="ordered locus">Suden_1102</name>
</gene>
<proteinExistence type="inferred from homology"/>
<reference key="1">
    <citation type="journal article" date="2008" name="Appl. Environ. Microbiol.">
        <title>Genome of the epsilonproteobacterial chemolithoautotroph Sulfurimonas denitrificans.</title>
        <authorList>
            <person name="Sievert S.M."/>
            <person name="Scott K.M."/>
            <person name="Klotz M.G."/>
            <person name="Chain P.S.G."/>
            <person name="Hauser L.J."/>
            <person name="Hemp J."/>
            <person name="Huegler M."/>
            <person name="Land M."/>
            <person name="Lapidus A."/>
            <person name="Larimer F.W."/>
            <person name="Lucas S."/>
            <person name="Malfatti S.A."/>
            <person name="Meyer F."/>
            <person name="Paulsen I.T."/>
            <person name="Ren Q."/>
            <person name="Simon J."/>
            <person name="Bailey K."/>
            <person name="Diaz E."/>
            <person name="Fitzpatrick K.A."/>
            <person name="Glover B."/>
            <person name="Gwatney N."/>
            <person name="Korajkic A."/>
            <person name="Long A."/>
            <person name="Mobberley J.M."/>
            <person name="Pantry S.N."/>
            <person name="Pazder G."/>
            <person name="Peterson S."/>
            <person name="Quintanilla J.D."/>
            <person name="Sprinkle R."/>
            <person name="Stephens J."/>
            <person name="Thomas P."/>
            <person name="Vaughn R."/>
            <person name="Weber M.J."/>
            <person name="Wooten L.L."/>
        </authorList>
    </citation>
    <scope>NUCLEOTIDE SEQUENCE [LARGE SCALE GENOMIC DNA]</scope>
    <source>
        <strain>ATCC 33889 / DSM 1251</strain>
    </source>
</reference>
<accession>Q30RK1</accession>
<feature type="chain" id="PRO_1000072973" description="3-isopropylmalate dehydratase small subunit">
    <location>
        <begin position="1"/>
        <end position="167"/>
    </location>
</feature>
<sequence length="167" mass="18247">MQKANIDGKVWRFGKDIDTDLIIAARYLSTSVPEELAKHVMEDADPQFVKKMSSGDIIVAGENFGCGSSREHAPIALKAAGVAAVIAPTFARIFYRNAFNMGLPIFELQESAEIAEGDEISVDMNNGTITNKTSSKVYKFIPIPQFMQELIDAGGLMNFAQNEIKGK</sequence>
<evidence type="ECO:0000255" key="1">
    <source>
        <dbReference type="HAMAP-Rule" id="MF_01032"/>
    </source>
</evidence>
<keyword id="KW-0028">Amino-acid biosynthesis</keyword>
<keyword id="KW-0100">Branched-chain amino acid biosynthesis</keyword>
<keyword id="KW-0432">Leucine biosynthesis</keyword>
<keyword id="KW-0456">Lyase</keyword>
<keyword id="KW-1185">Reference proteome</keyword>